<sequence>MHQTSMGIKMESHTLVFISILLCLYGADGNIVMTQSPKSMSMSVGERVTLTCKASENVVTYVSWYQQKPEQSPKLLIYGASNRYTGVPDRFTGSGSATDFTLTISSVQAEDLADYHCGQGYSYPYTFGGGTKLEIK</sequence>
<proteinExistence type="evidence at protein level"/>
<evidence type="ECO:0000269" key="1">
    <source>
    </source>
</evidence>
<evidence type="ECO:0007829" key="2">
    <source>
        <dbReference type="PDB" id="4KVC"/>
    </source>
</evidence>
<organism>
    <name type="scientific">Mus musculus</name>
    <name type="common">Mouse</name>
    <dbReference type="NCBI Taxonomy" id="10090"/>
    <lineage>
        <taxon>Eukaryota</taxon>
        <taxon>Metazoa</taxon>
        <taxon>Chordata</taxon>
        <taxon>Craniata</taxon>
        <taxon>Vertebrata</taxon>
        <taxon>Euteleostomi</taxon>
        <taxon>Mammalia</taxon>
        <taxon>Eutheria</taxon>
        <taxon>Euarchontoglires</taxon>
        <taxon>Glires</taxon>
        <taxon>Rodentia</taxon>
        <taxon>Myomorpha</taxon>
        <taxon>Muroidea</taxon>
        <taxon>Muridae</taxon>
        <taxon>Murinae</taxon>
        <taxon>Mus</taxon>
        <taxon>Mus</taxon>
    </lineage>
</organism>
<name>KV5A2_MOUSE</name>
<reference key="1">
    <citation type="journal article" date="1981" name="Nucleic Acids Res.">
        <title>Complete sequence of an immunoglobulin mRNA using specific priming and the dideoxynucleotide method of RNA sequencing.</title>
        <authorList>
            <person name="Hamlyn P.H."/>
            <person name="Gait M.J."/>
            <person name="Milstein C."/>
        </authorList>
    </citation>
    <scope>NUCLEOTIDE SEQUENCE [MRNA]</scope>
</reference>
<reference key="2">
    <citation type="journal article" date="1972" name="Biochem. J.">
        <title>The complete amino acid sequence of a mouse kappa light chain.</title>
        <authorList>
            <person name="Svasti J."/>
            <person name="Milstein C."/>
        </authorList>
    </citation>
    <scope>PROTEIN SEQUENCE OF 30-136</scope>
</reference>
<dbReference type="EMBL" id="V00810">
    <property type="protein sequence ID" value="CAA24192.1"/>
    <property type="status" value="ALT_TERM"/>
    <property type="molecule type" value="mRNA"/>
</dbReference>
<dbReference type="PIR" id="A93736">
    <property type="entry name" value="KVMS21"/>
</dbReference>
<dbReference type="PIR" id="I33932">
    <property type="entry name" value="I33932"/>
</dbReference>
<dbReference type="PDB" id="1IGC">
    <property type="method" value="X-ray"/>
    <property type="resolution" value="2.60 A"/>
    <property type="chains" value="L=30-136"/>
</dbReference>
<dbReference type="PDB" id="1UYW">
    <property type="method" value="X-ray"/>
    <property type="resolution" value="2.00 A"/>
    <property type="chains" value="L/N=30-136"/>
</dbReference>
<dbReference type="PDB" id="3J42">
    <property type="method" value="EM"/>
    <property type="resolution" value="21.00 A"/>
    <property type="chains" value="H/J/L=30-136"/>
</dbReference>
<dbReference type="PDB" id="4KVC">
    <property type="method" value="X-ray"/>
    <property type="resolution" value="2.31 A"/>
    <property type="chains" value="L=30-136"/>
</dbReference>
<dbReference type="PDBsum" id="1IGC"/>
<dbReference type="PDBsum" id="1UYW"/>
<dbReference type="PDBsum" id="3J42"/>
<dbReference type="PDBsum" id="4KVC"/>
<dbReference type="SMR" id="P01634"/>
<dbReference type="FunCoup" id="P01634">
    <property type="interactions" value="724"/>
</dbReference>
<dbReference type="InParanoid" id="P01634"/>
<dbReference type="PhylomeDB" id="P01634"/>
<dbReference type="EvolutionaryTrace" id="P01634"/>
<dbReference type="Proteomes" id="UP000000589">
    <property type="component" value="Unplaced"/>
</dbReference>
<dbReference type="RNAct" id="P01634">
    <property type="molecule type" value="protein"/>
</dbReference>
<dbReference type="GO" id="GO:0019814">
    <property type="term" value="C:immunoglobulin complex"/>
    <property type="evidence" value="ECO:0000318"/>
    <property type="project" value="GO_Central"/>
</dbReference>
<dbReference type="GO" id="GO:0002250">
    <property type="term" value="P:adaptive immune response"/>
    <property type="evidence" value="ECO:0007669"/>
    <property type="project" value="UniProtKB-KW"/>
</dbReference>
<dbReference type="GO" id="GO:0006955">
    <property type="term" value="P:immune response"/>
    <property type="evidence" value="ECO:0000318"/>
    <property type="project" value="GO_Central"/>
</dbReference>
<dbReference type="CDD" id="cd04980">
    <property type="entry name" value="IgV_L_kappa"/>
    <property type="match status" value="1"/>
</dbReference>
<dbReference type="FunFam" id="2.60.40.10:FF:001827">
    <property type="entry name" value="Immunoglobulin kappa variable 4-1"/>
    <property type="match status" value="1"/>
</dbReference>
<dbReference type="Gene3D" id="2.60.40.10">
    <property type="entry name" value="Immunoglobulins"/>
    <property type="match status" value="1"/>
</dbReference>
<dbReference type="InterPro" id="IPR007110">
    <property type="entry name" value="Ig-like_dom"/>
</dbReference>
<dbReference type="InterPro" id="IPR036179">
    <property type="entry name" value="Ig-like_dom_sf"/>
</dbReference>
<dbReference type="InterPro" id="IPR013783">
    <property type="entry name" value="Ig-like_fold"/>
</dbReference>
<dbReference type="InterPro" id="IPR003599">
    <property type="entry name" value="Ig_sub"/>
</dbReference>
<dbReference type="InterPro" id="IPR013106">
    <property type="entry name" value="Ig_V-set"/>
</dbReference>
<dbReference type="InterPro" id="IPR050150">
    <property type="entry name" value="IgV_Light_Chain"/>
</dbReference>
<dbReference type="PANTHER" id="PTHR23267">
    <property type="entry name" value="IMMUNOGLOBULIN LIGHT CHAIN"/>
    <property type="match status" value="1"/>
</dbReference>
<dbReference type="Pfam" id="PF07686">
    <property type="entry name" value="V-set"/>
    <property type="match status" value="1"/>
</dbReference>
<dbReference type="SMART" id="SM00409">
    <property type="entry name" value="IG"/>
    <property type="match status" value="1"/>
</dbReference>
<dbReference type="SMART" id="SM00406">
    <property type="entry name" value="IGv"/>
    <property type="match status" value="1"/>
</dbReference>
<dbReference type="SUPFAM" id="SSF48726">
    <property type="entry name" value="Immunoglobulin"/>
    <property type="match status" value="1"/>
</dbReference>
<dbReference type="PROSITE" id="PS50835">
    <property type="entry name" value="IG_LIKE"/>
    <property type="match status" value="1"/>
</dbReference>
<feature type="signal peptide" evidence="1">
    <location>
        <begin position="1"/>
        <end position="29"/>
    </location>
</feature>
<feature type="chain" id="PRO_0000015190" description="Ig kappa chain V-V region MOPC 21">
    <location>
        <begin position="30"/>
        <end position="136"/>
    </location>
</feature>
<feature type="region of interest" description="Framework-1">
    <location>
        <begin position="30"/>
        <end position="52"/>
    </location>
</feature>
<feature type="region of interest" description="Complementarity-determining-1">
    <location>
        <begin position="53"/>
        <end position="63"/>
    </location>
</feature>
<feature type="region of interest" description="Framework-2">
    <location>
        <begin position="64"/>
        <end position="78"/>
    </location>
</feature>
<feature type="region of interest" description="Complementarity-determining-2">
    <location>
        <begin position="79"/>
        <end position="85"/>
    </location>
</feature>
<feature type="region of interest" description="Framework-3">
    <location>
        <begin position="86"/>
        <end position="117"/>
    </location>
</feature>
<feature type="region of interest" description="Complementarity-determining-3">
    <location>
        <begin position="118"/>
        <end position="126"/>
    </location>
</feature>
<feature type="region of interest" description="Framework-4">
    <location>
        <begin position="127"/>
        <end position="136"/>
    </location>
</feature>
<feature type="non-terminal residue">
    <location>
        <position position="136"/>
    </location>
</feature>
<feature type="strand" evidence="2">
    <location>
        <begin position="33"/>
        <end position="36"/>
    </location>
</feature>
<feature type="strand" evidence="2">
    <location>
        <begin position="38"/>
        <end position="42"/>
    </location>
</feature>
<feature type="strand" evidence="2">
    <location>
        <begin position="46"/>
        <end position="60"/>
    </location>
</feature>
<feature type="strand" evidence="2">
    <location>
        <begin position="62"/>
        <end position="67"/>
    </location>
</feature>
<feature type="strand" evidence="2">
    <location>
        <begin position="74"/>
        <end position="78"/>
    </location>
</feature>
<feature type="turn" evidence="2">
    <location>
        <begin position="79"/>
        <end position="81"/>
    </location>
</feature>
<feature type="strand" evidence="2">
    <location>
        <begin position="91"/>
        <end position="106"/>
    </location>
</feature>
<feature type="helix" evidence="2">
    <location>
        <begin position="109"/>
        <end position="111"/>
    </location>
</feature>
<feature type="strand" evidence="2">
    <location>
        <begin position="113"/>
        <end position="119"/>
    </location>
</feature>
<feature type="strand" evidence="2">
    <location>
        <begin position="121"/>
        <end position="124"/>
    </location>
</feature>
<feature type="strand" evidence="2">
    <location>
        <begin position="131"/>
        <end position="135"/>
    </location>
</feature>
<keyword id="KW-0002">3D-structure</keyword>
<keyword id="KW-1064">Adaptive immunity</keyword>
<keyword id="KW-0903">Direct protein sequencing</keyword>
<keyword id="KW-0391">Immunity</keyword>
<keyword id="KW-1280">Immunoglobulin</keyword>
<keyword id="KW-1185">Reference proteome</keyword>
<keyword id="KW-0732">Signal</keyword>
<protein>
    <recommendedName>
        <fullName>Ig kappa chain V-V region MOPC 21</fullName>
    </recommendedName>
</protein>
<accession>P01634</accession>